<accession>Q5BK67</accession>
<evidence type="ECO:0000250" key="1"/>
<evidence type="ECO:0000250" key="2">
    <source>
        <dbReference type="UniProtKB" id="Q6ZNK6"/>
    </source>
</evidence>
<evidence type="ECO:0000255" key="3"/>
<evidence type="ECO:0000312" key="4">
    <source>
        <dbReference type="EMBL" id="AAH91188.1"/>
    </source>
</evidence>
<organism>
    <name type="scientific">Rattus norvegicus</name>
    <name type="common">Rat</name>
    <dbReference type="NCBI Taxonomy" id="10116"/>
    <lineage>
        <taxon>Eukaryota</taxon>
        <taxon>Metazoa</taxon>
        <taxon>Chordata</taxon>
        <taxon>Craniata</taxon>
        <taxon>Vertebrata</taxon>
        <taxon>Euteleostomi</taxon>
        <taxon>Mammalia</taxon>
        <taxon>Eutheria</taxon>
        <taxon>Euarchontoglires</taxon>
        <taxon>Glires</taxon>
        <taxon>Rodentia</taxon>
        <taxon>Myomorpha</taxon>
        <taxon>Muroidea</taxon>
        <taxon>Muridae</taxon>
        <taxon>Murinae</taxon>
        <taxon>Rattus</taxon>
    </lineage>
</organism>
<dbReference type="EMBL" id="BC091188">
    <property type="protein sequence ID" value="AAH91188.1"/>
    <property type="molecule type" value="mRNA"/>
</dbReference>
<dbReference type="RefSeq" id="NP_001020200.1">
    <property type="nucleotide sequence ID" value="NM_001025029.1"/>
</dbReference>
<dbReference type="RefSeq" id="XP_006253640.1">
    <property type="nucleotide sequence ID" value="XM_006253578.5"/>
</dbReference>
<dbReference type="RefSeq" id="XP_006253641.1">
    <property type="nucleotide sequence ID" value="XM_006253579.3"/>
</dbReference>
<dbReference type="RefSeq" id="XP_008769665.1">
    <property type="nucleotide sequence ID" value="XM_008771443.2"/>
</dbReference>
<dbReference type="SMR" id="Q5BK67"/>
<dbReference type="FunCoup" id="Q5BK67">
    <property type="interactions" value="53"/>
</dbReference>
<dbReference type="STRING" id="10116.ENSRNOP00000015878"/>
<dbReference type="PaxDb" id="10116-ENSRNOP00000015878"/>
<dbReference type="Ensembl" id="ENSRNOT00000015878.5">
    <property type="protein sequence ID" value="ENSRNOP00000015878.3"/>
    <property type="gene ID" value="ENSRNOG00000011947.5"/>
</dbReference>
<dbReference type="Ensembl" id="ENSRNOT00000116729.1">
    <property type="protein sequence ID" value="ENSRNOP00000083675.1"/>
    <property type="gene ID" value="ENSRNOG00000011947.5"/>
</dbReference>
<dbReference type="GeneID" id="364674"/>
<dbReference type="KEGG" id="rno:364674"/>
<dbReference type="UCSC" id="RGD:1311681">
    <property type="organism name" value="rat"/>
</dbReference>
<dbReference type="AGR" id="RGD:1311681"/>
<dbReference type="CTD" id="497189"/>
<dbReference type="RGD" id="1311681">
    <property type="gene designation" value="Tifab"/>
</dbReference>
<dbReference type="eggNOG" id="ENOG502SPI3">
    <property type="taxonomic scope" value="Eukaryota"/>
</dbReference>
<dbReference type="GeneTree" id="ENSGT00940000154589"/>
<dbReference type="HOGENOM" id="CLU_116346_0_0_1"/>
<dbReference type="InParanoid" id="Q5BK67"/>
<dbReference type="OMA" id="PLIYRPQ"/>
<dbReference type="OrthoDB" id="19670at9989"/>
<dbReference type="PhylomeDB" id="Q5BK67"/>
<dbReference type="TreeFam" id="TF333218"/>
<dbReference type="PRO" id="PR:Q5BK67"/>
<dbReference type="Proteomes" id="UP000002494">
    <property type="component" value="Chromosome 17"/>
</dbReference>
<dbReference type="Bgee" id="ENSRNOG00000011947">
    <property type="expression patterns" value="Expressed in spleen and 19 other cell types or tissues"/>
</dbReference>
<dbReference type="GO" id="GO:0035800">
    <property type="term" value="F:deubiquitinase activator activity"/>
    <property type="evidence" value="ECO:0000266"/>
    <property type="project" value="RGD"/>
</dbReference>
<dbReference type="GO" id="GO:0031223">
    <property type="term" value="P:auditory behavior"/>
    <property type="evidence" value="ECO:0000266"/>
    <property type="project" value="RGD"/>
</dbReference>
<dbReference type="GO" id="GO:0090102">
    <property type="term" value="P:cochlea development"/>
    <property type="evidence" value="ECO:0000266"/>
    <property type="project" value="RGD"/>
</dbReference>
<dbReference type="GO" id="GO:0090103">
    <property type="term" value="P:cochlea morphogenesis"/>
    <property type="evidence" value="ECO:0000266"/>
    <property type="project" value="RGD"/>
</dbReference>
<dbReference type="GO" id="GO:0097094">
    <property type="term" value="P:craniofacial suture morphogenesis"/>
    <property type="evidence" value="ECO:0000266"/>
    <property type="project" value="RGD"/>
</dbReference>
<dbReference type="GO" id="GO:0048806">
    <property type="term" value="P:genitalia development"/>
    <property type="evidence" value="ECO:0000266"/>
    <property type="project" value="RGD"/>
</dbReference>
<dbReference type="GO" id="GO:0035112">
    <property type="term" value="P:genitalia morphogenesis"/>
    <property type="evidence" value="ECO:0000266"/>
    <property type="project" value="RGD"/>
</dbReference>
<dbReference type="GO" id="GO:1905748">
    <property type="term" value="P:hard palate morphogenesis"/>
    <property type="evidence" value="ECO:0000266"/>
    <property type="project" value="RGD"/>
</dbReference>
<dbReference type="GO" id="GO:0002244">
    <property type="term" value="P:hematopoietic progenitor cell differentiation"/>
    <property type="evidence" value="ECO:0000266"/>
    <property type="project" value="RGD"/>
</dbReference>
<dbReference type="GO" id="GO:0048839">
    <property type="term" value="P:inner ear development"/>
    <property type="evidence" value="ECO:0000266"/>
    <property type="project" value="RGD"/>
</dbReference>
<dbReference type="GO" id="GO:0042472">
    <property type="term" value="P:inner ear morphogenesis"/>
    <property type="evidence" value="ECO:0000266"/>
    <property type="project" value="RGD"/>
</dbReference>
<dbReference type="GO" id="GO:0098583">
    <property type="term" value="P:learned vocalization behavior"/>
    <property type="evidence" value="ECO:0000266"/>
    <property type="project" value="RGD"/>
</dbReference>
<dbReference type="GO" id="GO:0031663">
    <property type="term" value="P:lipopolysaccharide-mediated signaling pathway"/>
    <property type="evidence" value="ECO:0000266"/>
    <property type="project" value="RGD"/>
</dbReference>
<dbReference type="GO" id="GO:0071626">
    <property type="term" value="P:mastication"/>
    <property type="evidence" value="ECO:0000266"/>
    <property type="project" value="RGD"/>
</dbReference>
<dbReference type="GO" id="GO:0030099">
    <property type="term" value="P:myeloid cell differentiation"/>
    <property type="evidence" value="ECO:0000266"/>
    <property type="project" value="RGD"/>
</dbReference>
<dbReference type="GO" id="GO:1901078">
    <property type="term" value="P:negative regulation of relaxation of muscle"/>
    <property type="evidence" value="ECO:0000266"/>
    <property type="project" value="RGD"/>
</dbReference>
<dbReference type="GO" id="GO:1905747">
    <property type="term" value="P:negative regulation of saliva secretion"/>
    <property type="evidence" value="ECO:0000266"/>
    <property type="project" value="RGD"/>
</dbReference>
<dbReference type="GO" id="GO:0050885">
    <property type="term" value="P:neuromuscular process controlling balance"/>
    <property type="evidence" value="ECO:0000266"/>
    <property type="project" value="RGD"/>
</dbReference>
<dbReference type="GO" id="GO:0030432">
    <property type="term" value="P:peristalsis"/>
    <property type="evidence" value="ECO:0000266"/>
    <property type="project" value="RGD"/>
</dbReference>
<dbReference type="GO" id="GO:0043123">
    <property type="term" value="P:positive regulation of canonical NF-kappaB signal transduction"/>
    <property type="evidence" value="ECO:0007669"/>
    <property type="project" value="InterPro"/>
</dbReference>
<dbReference type="GO" id="GO:0010468">
    <property type="term" value="P:regulation of gene expression"/>
    <property type="evidence" value="ECO:0000266"/>
    <property type="project" value="RGD"/>
</dbReference>
<dbReference type="GO" id="GO:1902238">
    <property type="term" value="P:regulation of intrinsic apoptotic signaling pathway in response to osmotic stress by p53 class mediator"/>
    <property type="evidence" value="ECO:0000266"/>
    <property type="project" value="RGD"/>
</dbReference>
<dbReference type="GO" id="GO:0048634">
    <property type="term" value="P:regulation of muscle organ development"/>
    <property type="evidence" value="ECO:0000266"/>
    <property type="project" value="RGD"/>
</dbReference>
<dbReference type="GO" id="GO:0007356">
    <property type="term" value="P:thorax and anterior abdomen determination"/>
    <property type="evidence" value="ECO:0000266"/>
    <property type="project" value="RGD"/>
</dbReference>
<dbReference type="GO" id="GO:0002224">
    <property type="term" value="P:toll-like receptor signaling pathway"/>
    <property type="evidence" value="ECO:0000266"/>
    <property type="project" value="RGD"/>
</dbReference>
<dbReference type="GO" id="GO:0021559">
    <property type="term" value="P:trigeminal nerve development"/>
    <property type="evidence" value="ECO:0000266"/>
    <property type="project" value="RGD"/>
</dbReference>
<dbReference type="GO" id="GO:0021650">
    <property type="term" value="P:vestibulocochlear nerve formation"/>
    <property type="evidence" value="ECO:0000266"/>
    <property type="project" value="RGD"/>
</dbReference>
<dbReference type="Gene3D" id="2.60.200.20">
    <property type="match status" value="1"/>
</dbReference>
<dbReference type="InterPro" id="IPR000253">
    <property type="entry name" value="FHA_dom"/>
</dbReference>
<dbReference type="InterPro" id="IPR008984">
    <property type="entry name" value="SMAD_FHA_dom_sf"/>
</dbReference>
<dbReference type="InterPro" id="IPR033621">
    <property type="entry name" value="TIFA"/>
</dbReference>
<dbReference type="PANTHER" id="PTHR31266">
    <property type="entry name" value="TRAF-INTERACTING PROTEIN WITH FHA DOMAIN-CONTAINING PROTEIN A FAMILY MEMBER"/>
    <property type="match status" value="1"/>
</dbReference>
<dbReference type="PANTHER" id="PTHR31266:SF3">
    <property type="entry name" value="TRAF-INTERACTING PROTEIN WITH FHA DOMAIN-CONTAINING PROTEIN B"/>
    <property type="match status" value="1"/>
</dbReference>
<dbReference type="Pfam" id="PF00498">
    <property type="entry name" value="FHA"/>
    <property type="match status" value="1"/>
</dbReference>
<dbReference type="SUPFAM" id="SSF49879">
    <property type="entry name" value="SMAD/FHA domain"/>
    <property type="match status" value="1"/>
</dbReference>
<reference evidence="4" key="1">
    <citation type="journal article" date="2004" name="Genome Res.">
        <title>The status, quality, and expansion of the NIH full-length cDNA project: the Mammalian Gene Collection (MGC).</title>
        <authorList>
            <consortium name="The MGC Project Team"/>
        </authorList>
    </citation>
    <scope>NUCLEOTIDE SEQUENCE [LARGE SCALE MRNA]</scope>
    <source>
        <tissue evidence="4">Spleen</tissue>
    </source>
</reference>
<comment type="function">
    <text evidence="1">Inhibits TIFA-mediated TRAF6 activation possibly by inducing a conformational change in TIFA.</text>
</comment>
<comment type="subunit">
    <text evidence="1">Interacts with TIFA.</text>
</comment>
<gene>
    <name evidence="2" type="primary">Tifab</name>
</gene>
<feature type="chain" id="PRO_0000320694" description="TRAF-interacting protein with FHA domain-containing protein B">
    <location>
        <begin position="1"/>
        <end position="147"/>
    </location>
</feature>
<feature type="domain" description="FHA" evidence="3">
    <location>
        <begin position="36"/>
        <end position="108"/>
    </location>
</feature>
<proteinExistence type="evidence at transcript level"/>
<keyword id="KW-1185">Reference proteome</keyword>
<sequence length="147" mass="16666">MERPLTVLQVSLYHPTQGPVAFAKVPLQLQHDASRLLVGRGQDTHLQLQLPQLSRHHLCLEPYLEKGSNLLAFCLKVLTRQSCVWVNGLPLRYLEQVPLHSVNRISFSGIQMLIRKEGGASLEAFVCYFHLSPSPLIYRPKAQETDE</sequence>
<protein>
    <recommendedName>
        <fullName>TRAF-interacting protein with FHA domain-containing protein B</fullName>
    </recommendedName>
    <alternativeName>
        <fullName>TIFA-like protein</fullName>
    </alternativeName>
</protein>
<name>TIFAB_RAT</name>